<reference key="1">
    <citation type="journal article" date="2007" name="J. Bacteriol.">
        <title>The genome sequence of avian pathogenic Escherichia coli strain O1:K1:H7 shares strong similarities with human extraintestinal pathogenic E. coli genomes.</title>
        <authorList>
            <person name="Johnson T.J."/>
            <person name="Kariyawasam S."/>
            <person name="Wannemuehler Y."/>
            <person name="Mangiamele P."/>
            <person name="Johnson S.J."/>
            <person name="Doetkott C."/>
            <person name="Skyberg J.A."/>
            <person name="Lynne A.M."/>
            <person name="Johnson J.R."/>
            <person name="Nolan L.K."/>
        </authorList>
    </citation>
    <scope>NUCLEOTIDE SEQUENCE [LARGE SCALE GENOMIC DNA]</scope>
</reference>
<evidence type="ECO:0000255" key="1">
    <source>
        <dbReference type="HAMAP-Rule" id="MF_00332"/>
    </source>
</evidence>
<evidence type="ECO:0000256" key="2">
    <source>
        <dbReference type="SAM" id="MobiDB-lite"/>
    </source>
</evidence>
<keyword id="KW-0007">Acetylation</keyword>
<keyword id="KW-0067">ATP-binding</keyword>
<keyword id="KW-0143">Chaperone</keyword>
<keyword id="KW-0547">Nucleotide-binding</keyword>
<keyword id="KW-0597">Phosphoprotein</keyword>
<keyword id="KW-1185">Reference proteome</keyword>
<keyword id="KW-0346">Stress response</keyword>
<sequence length="638" mass="69115">MGKIIGIDLGTTNSCVAIMDGTTPRVLENAEGDRTTPSIIAYTQDGETLVGQPAKRQAVTNPQNTLFAIKRLIGRRFQDEEVQRDVSIMPFKIIAADNGDAWVEVKGQKMAPPQISAEVLKKMKKTAEDYLGEPVTEAVITVPAYFNDAQRQATKDAGRIAGLEVKRIINEPTAAALAYGLDKGTGNRTIAVYDLGGGTFDISIIEIDEVDGEKTFEVLATNGDTHLGGEDFDSRLINYLVEEFKKDQGIDLRNDPLAMQRLKEAAEKAKIELSSAQQTDVNLPYITADATGPKHMNIKVTRAKLESLVEDLVNRSIEPLKVALQDAGLSVSDIDDVILVGGQTRMPMVQKKVAEFFGKEPRKDVNPDEAVAIGAAVQGGVLTGDVKDVLLLDVTPLSLGIETMGGVMTTLIAKNTTIPTKHSQVFSTAEDNQSAVTIHVLQGERKRAADNKSLGQFNLDGINPAPRGMPQIEVTFDIDADGILHVSAKDKNSGKEQKITIKASSGLNEDEIQKMVRDAEANAEADRKFEELVQTRNQGDHLLHSTRKQVEEAGDKLPADDKTAIESALTALETALKGEDKAAIEAKMQELAQVSQKLMEIAQQQHAQQQTAGADASANNAKDDDVVDAEFEEVKDKK</sequence>
<protein>
    <recommendedName>
        <fullName evidence="1">Chaperone protein DnaK</fullName>
    </recommendedName>
    <alternativeName>
        <fullName evidence="1">HSP70</fullName>
    </alternativeName>
    <alternativeName>
        <fullName evidence="1">Heat shock 70 kDa protein</fullName>
    </alternativeName>
    <alternativeName>
        <fullName evidence="1">Heat shock protein 70</fullName>
    </alternativeName>
</protein>
<proteinExistence type="inferred from homology"/>
<dbReference type="EMBL" id="CP000468">
    <property type="protein sequence ID" value="ABI99505.1"/>
    <property type="molecule type" value="Genomic_DNA"/>
</dbReference>
<dbReference type="RefSeq" id="WP_000516135.1">
    <property type="nucleotide sequence ID" value="NZ_CADILS010000013.1"/>
</dbReference>
<dbReference type="BMRB" id="A1A766"/>
<dbReference type="SMR" id="A1A766"/>
<dbReference type="GeneID" id="93777429"/>
<dbReference type="KEGG" id="ecv:APECO1_1965"/>
<dbReference type="HOGENOM" id="CLU_005965_2_1_6"/>
<dbReference type="Proteomes" id="UP000008216">
    <property type="component" value="Chromosome"/>
</dbReference>
<dbReference type="GO" id="GO:0005524">
    <property type="term" value="F:ATP binding"/>
    <property type="evidence" value="ECO:0007669"/>
    <property type="project" value="UniProtKB-UniRule"/>
</dbReference>
<dbReference type="GO" id="GO:0140662">
    <property type="term" value="F:ATP-dependent protein folding chaperone"/>
    <property type="evidence" value="ECO:0007669"/>
    <property type="project" value="InterPro"/>
</dbReference>
<dbReference type="GO" id="GO:0019904">
    <property type="term" value="F:protein domain specific binding"/>
    <property type="evidence" value="ECO:0000353"/>
    <property type="project" value="BHF-UCL"/>
</dbReference>
<dbReference type="GO" id="GO:0051087">
    <property type="term" value="F:protein-folding chaperone binding"/>
    <property type="evidence" value="ECO:0000304"/>
    <property type="project" value="BHF-UCL"/>
</dbReference>
<dbReference type="GO" id="GO:0051082">
    <property type="term" value="F:unfolded protein binding"/>
    <property type="evidence" value="ECO:0007669"/>
    <property type="project" value="InterPro"/>
</dbReference>
<dbReference type="CDD" id="cd10234">
    <property type="entry name" value="ASKHA_NBD_HSP70_DnaK-like"/>
    <property type="match status" value="1"/>
</dbReference>
<dbReference type="FunFam" id="2.60.34.10:FF:000014">
    <property type="entry name" value="Chaperone protein DnaK HSP70"/>
    <property type="match status" value="1"/>
</dbReference>
<dbReference type="FunFam" id="1.20.1270.10:FF:000001">
    <property type="entry name" value="Molecular chaperone DnaK"/>
    <property type="match status" value="1"/>
</dbReference>
<dbReference type="FunFam" id="3.30.420.40:FF:000004">
    <property type="entry name" value="Molecular chaperone DnaK"/>
    <property type="match status" value="1"/>
</dbReference>
<dbReference type="FunFam" id="3.90.640.10:FF:000003">
    <property type="entry name" value="Molecular chaperone DnaK"/>
    <property type="match status" value="1"/>
</dbReference>
<dbReference type="Gene3D" id="1.20.1270.10">
    <property type="match status" value="1"/>
</dbReference>
<dbReference type="Gene3D" id="3.30.420.40">
    <property type="match status" value="2"/>
</dbReference>
<dbReference type="Gene3D" id="3.90.640.10">
    <property type="entry name" value="Actin, Chain A, domain 4"/>
    <property type="match status" value="1"/>
</dbReference>
<dbReference type="Gene3D" id="2.60.34.10">
    <property type="entry name" value="Substrate Binding Domain Of DNAk, Chain A, domain 1"/>
    <property type="match status" value="1"/>
</dbReference>
<dbReference type="HAMAP" id="MF_00332">
    <property type="entry name" value="DnaK"/>
    <property type="match status" value="1"/>
</dbReference>
<dbReference type="InterPro" id="IPR043129">
    <property type="entry name" value="ATPase_NBD"/>
</dbReference>
<dbReference type="InterPro" id="IPR012725">
    <property type="entry name" value="Chaperone_DnaK"/>
</dbReference>
<dbReference type="InterPro" id="IPR018181">
    <property type="entry name" value="Heat_shock_70_CS"/>
</dbReference>
<dbReference type="InterPro" id="IPR029048">
    <property type="entry name" value="HSP70_C_sf"/>
</dbReference>
<dbReference type="InterPro" id="IPR029047">
    <property type="entry name" value="HSP70_peptide-bd_sf"/>
</dbReference>
<dbReference type="InterPro" id="IPR013126">
    <property type="entry name" value="Hsp_70_fam"/>
</dbReference>
<dbReference type="NCBIfam" id="NF001413">
    <property type="entry name" value="PRK00290.1"/>
    <property type="match status" value="1"/>
</dbReference>
<dbReference type="NCBIfam" id="NF003520">
    <property type="entry name" value="PRK05183.1"/>
    <property type="match status" value="1"/>
</dbReference>
<dbReference type="NCBIfam" id="TIGR02350">
    <property type="entry name" value="prok_dnaK"/>
    <property type="match status" value="1"/>
</dbReference>
<dbReference type="PANTHER" id="PTHR19375">
    <property type="entry name" value="HEAT SHOCK PROTEIN 70KDA"/>
    <property type="match status" value="1"/>
</dbReference>
<dbReference type="Pfam" id="PF00012">
    <property type="entry name" value="HSP70"/>
    <property type="match status" value="1"/>
</dbReference>
<dbReference type="PRINTS" id="PR00301">
    <property type="entry name" value="HEATSHOCK70"/>
</dbReference>
<dbReference type="SUPFAM" id="SSF53067">
    <property type="entry name" value="Actin-like ATPase domain"/>
    <property type="match status" value="2"/>
</dbReference>
<dbReference type="SUPFAM" id="SSF100934">
    <property type="entry name" value="Heat shock protein 70kD (HSP70), C-terminal subdomain"/>
    <property type="match status" value="1"/>
</dbReference>
<dbReference type="SUPFAM" id="SSF100920">
    <property type="entry name" value="Heat shock protein 70kD (HSP70), peptide-binding domain"/>
    <property type="match status" value="1"/>
</dbReference>
<dbReference type="PROSITE" id="PS00297">
    <property type="entry name" value="HSP70_1"/>
    <property type="match status" value="1"/>
</dbReference>
<dbReference type="PROSITE" id="PS00329">
    <property type="entry name" value="HSP70_2"/>
    <property type="match status" value="1"/>
</dbReference>
<dbReference type="PROSITE" id="PS01036">
    <property type="entry name" value="HSP70_3"/>
    <property type="match status" value="1"/>
</dbReference>
<comment type="function">
    <text evidence="1">Acts as a chaperone.</text>
</comment>
<comment type="induction">
    <text evidence="1">By stress conditions e.g. heat shock.</text>
</comment>
<comment type="similarity">
    <text evidence="1">Belongs to the heat shock protein 70 family.</text>
</comment>
<gene>
    <name evidence="1" type="primary">dnaK</name>
    <name type="ordered locus">Ecok1_00120</name>
    <name type="ORF">APECO1_1965</name>
</gene>
<feature type="chain" id="PRO_1000059554" description="Chaperone protein DnaK">
    <location>
        <begin position="1"/>
        <end position="638"/>
    </location>
</feature>
<feature type="region of interest" description="Disordered" evidence="2">
    <location>
        <begin position="602"/>
        <end position="638"/>
    </location>
</feature>
<feature type="compositionally biased region" description="Low complexity" evidence="2">
    <location>
        <begin position="602"/>
        <end position="620"/>
    </location>
</feature>
<feature type="modified residue" description="N6-acetyllysine" evidence="1">
    <location>
        <position position="109"/>
    </location>
</feature>
<feature type="modified residue" description="Phosphothreonine; by autocatalysis" evidence="1">
    <location>
        <position position="199"/>
    </location>
</feature>
<feature type="modified residue" description="N6-acetyllysine" evidence="1">
    <location>
        <position position="245"/>
    </location>
</feature>
<feature type="modified residue" description="N6-acetyllysine" evidence="1">
    <location>
        <position position="304"/>
    </location>
</feature>
<feature type="modified residue" description="N6-acetyllysine" evidence="1">
    <location>
        <position position="421"/>
    </location>
</feature>
<feature type="modified residue" description="N6-acetyllysine" evidence="1">
    <location>
        <position position="556"/>
    </location>
</feature>
<organism>
    <name type="scientific">Escherichia coli O1:K1 / APEC</name>
    <dbReference type="NCBI Taxonomy" id="405955"/>
    <lineage>
        <taxon>Bacteria</taxon>
        <taxon>Pseudomonadati</taxon>
        <taxon>Pseudomonadota</taxon>
        <taxon>Gammaproteobacteria</taxon>
        <taxon>Enterobacterales</taxon>
        <taxon>Enterobacteriaceae</taxon>
        <taxon>Escherichia</taxon>
    </lineage>
</organism>
<accession>A1A766</accession>
<name>DNAK_ECOK1</name>